<feature type="initiator methionine" description="Removed" evidence="3">
    <location>
        <position position="1"/>
    </location>
</feature>
<feature type="chain" id="PRO_0000137441" description="Eukaryotic translation initiation factor 2 subunit 3">
    <location>
        <begin position="2"/>
        <end position="472"/>
    </location>
</feature>
<feature type="domain" description="tr-type G" evidence="6">
    <location>
        <begin position="39"/>
        <end position="248"/>
    </location>
</feature>
<feature type="region of interest" description="G1" evidence="6">
    <location>
        <begin position="48"/>
        <end position="55"/>
    </location>
</feature>
<feature type="region of interest" description="G2" evidence="6">
    <location>
        <begin position="76"/>
        <end position="80"/>
    </location>
</feature>
<feature type="region of interest" description="G3" evidence="6">
    <location>
        <begin position="134"/>
        <end position="137"/>
    </location>
</feature>
<feature type="region of interest" description="G4" evidence="6">
    <location>
        <begin position="190"/>
        <end position="193"/>
    </location>
</feature>
<feature type="region of interest" description="G5" evidence="6">
    <location>
        <begin position="225"/>
        <end position="227"/>
    </location>
</feature>
<feature type="region of interest" description="Interacts with CDC123" evidence="3">
    <location>
        <begin position="457"/>
        <end position="469"/>
    </location>
</feature>
<feature type="binding site" evidence="2">
    <location>
        <begin position="51"/>
        <end position="56"/>
    </location>
    <ligand>
        <name>GTP</name>
        <dbReference type="ChEBI" id="CHEBI:37565"/>
    </ligand>
</feature>
<feature type="binding site" evidence="2">
    <location>
        <begin position="190"/>
        <end position="193"/>
    </location>
    <ligand>
        <name>GTP</name>
        <dbReference type="ChEBI" id="CHEBI:37565"/>
    </ligand>
</feature>
<feature type="binding site" evidence="2">
    <location>
        <begin position="225"/>
        <end position="227"/>
    </location>
    <ligand>
        <name>GTP</name>
        <dbReference type="ChEBI" id="CHEBI:37565"/>
    </ligand>
</feature>
<feature type="modified residue" description="N-acetylalanine" evidence="3">
    <location>
        <position position="2"/>
    </location>
</feature>
<feature type="modified residue" description="Phosphoserine" evidence="5">
    <location>
        <position position="16"/>
    </location>
</feature>
<reference evidence="7" key="1">
    <citation type="submission" date="2017-08" db="EMBL/GenBank/DDBJ databases">
        <title>USMARCv1.0.</title>
        <authorList>
            <person name="Hannum G.I."/>
            <person name="Koren S."/>
            <person name="Schroeder S.G."/>
            <person name="Chin S.C."/>
            <person name="Nonneman D.J."/>
            <person name="Becker S.A."/>
            <person name="Rosen B.D."/>
            <person name="Bickhart D.M."/>
            <person name="Putnam N.H."/>
            <person name="Green R.E."/>
            <person name="Tuggle C.K."/>
            <person name="Liu H."/>
            <person name="Rohrer G.A."/>
            <person name="Warr A."/>
            <person name="Hall R."/>
            <person name="Kim K."/>
            <person name="Hume D.A."/>
            <person name="Talbot R."/>
            <person name="Chow W."/>
            <person name="Howe K."/>
            <person name="Schwartz A.S."/>
            <person name="Watson M."/>
            <person name="Archibald A.L."/>
            <person name="Phillippy A.M."/>
            <person name="Smith T.P.L."/>
        </authorList>
    </citation>
    <scope>NUCLEOTIDE SEQUENCE [LARGE SCALE GENOMIC DNA]</scope>
</reference>
<reference key="2">
    <citation type="journal article" date="1988" name="Agric. Biol. Chem.">
        <title>Pig liver translational initiation factor eIF-2: N-terminal amino acid sequences of alpha and gamma subunits and the phosphorylation site structure.</title>
        <authorList>
            <person name="Suzuki H."/>
            <person name="Mukouyama E.B."/>
        </authorList>
    </citation>
    <scope>PROTEIN SEQUENCE OF 2-23</scope>
    <source>
        <tissue>Liver</tissue>
    </source>
</reference>
<dbReference type="EC" id="3.6.5.3" evidence="2"/>
<dbReference type="PIR" id="PT0052">
    <property type="entry name" value="PT0052"/>
</dbReference>
<dbReference type="RefSeq" id="XP_003135028.3">
    <property type="nucleotide sequence ID" value="XM_003134980.6"/>
</dbReference>
<dbReference type="RefSeq" id="XP_020936181.1">
    <property type="nucleotide sequence ID" value="XM_021080522.1"/>
</dbReference>
<dbReference type="SMR" id="P20461"/>
<dbReference type="Ensembl" id="ENSSSCT00005067192">
    <property type="protein sequence ID" value="ENSSSCP00005041731"/>
    <property type="gene ID" value="ENSSSCG00005041832"/>
</dbReference>
<dbReference type="Ensembl" id="ENSSSCT00005067211">
    <property type="protein sequence ID" value="ENSSSCP00005041747"/>
    <property type="gene ID" value="ENSSSCG00005041832"/>
</dbReference>
<dbReference type="Ensembl" id="ENSSSCT00115006935">
    <property type="protein sequence ID" value="ENSSSCP00115006507"/>
    <property type="gene ID" value="ENSSSCG00115004040"/>
</dbReference>
<dbReference type="GeneID" id="100525970"/>
<dbReference type="KEGG" id="ssc:100525970"/>
<dbReference type="CTD" id="1968"/>
<dbReference type="InParanoid" id="P20461"/>
<dbReference type="OMA" id="NIGMVGH"/>
<dbReference type="OrthoDB" id="1045173at2759"/>
<dbReference type="Proteomes" id="UP000008227">
    <property type="component" value="Unplaced"/>
</dbReference>
<dbReference type="Proteomes" id="UP000314985">
    <property type="component" value="Unassembled WGS sequence"/>
</dbReference>
<dbReference type="Proteomes" id="UP000694570">
    <property type="component" value="Unplaced"/>
</dbReference>
<dbReference type="Proteomes" id="UP000694571">
    <property type="component" value="Unplaced"/>
</dbReference>
<dbReference type="Proteomes" id="UP000694720">
    <property type="component" value="Unplaced"/>
</dbReference>
<dbReference type="Proteomes" id="UP000694722">
    <property type="component" value="Unplaced"/>
</dbReference>
<dbReference type="Proteomes" id="UP000694723">
    <property type="component" value="Unplaced"/>
</dbReference>
<dbReference type="Proteomes" id="UP000694724">
    <property type="component" value="Unplaced"/>
</dbReference>
<dbReference type="Proteomes" id="UP000694725">
    <property type="component" value="Unplaced"/>
</dbReference>
<dbReference type="Proteomes" id="UP000694726">
    <property type="component" value="Unplaced"/>
</dbReference>
<dbReference type="Proteomes" id="UP000694727">
    <property type="component" value="Unplaced"/>
</dbReference>
<dbReference type="Proteomes" id="UP000694728">
    <property type="component" value="Unplaced"/>
</dbReference>
<dbReference type="GO" id="GO:0005829">
    <property type="term" value="C:cytosol"/>
    <property type="evidence" value="ECO:0007669"/>
    <property type="project" value="UniProtKB-SubCell"/>
</dbReference>
<dbReference type="GO" id="GO:0005850">
    <property type="term" value="C:eukaryotic translation initiation factor 2 complex"/>
    <property type="evidence" value="ECO:0000250"/>
    <property type="project" value="UniProtKB"/>
</dbReference>
<dbReference type="GO" id="GO:0005525">
    <property type="term" value="F:GTP binding"/>
    <property type="evidence" value="ECO:0007669"/>
    <property type="project" value="UniProtKB-KW"/>
</dbReference>
<dbReference type="GO" id="GO:0003924">
    <property type="term" value="F:GTPase activity"/>
    <property type="evidence" value="ECO:0007669"/>
    <property type="project" value="InterPro"/>
</dbReference>
<dbReference type="GO" id="GO:1990856">
    <property type="term" value="F:methionyl-initiator methionine tRNA binding"/>
    <property type="evidence" value="ECO:0000250"/>
    <property type="project" value="UniProtKB"/>
</dbReference>
<dbReference type="GO" id="GO:0003743">
    <property type="term" value="F:translation initiation factor activity"/>
    <property type="evidence" value="ECO:0007669"/>
    <property type="project" value="UniProtKB-KW"/>
</dbReference>
<dbReference type="GO" id="GO:0002183">
    <property type="term" value="P:cytoplasmic translational initiation"/>
    <property type="evidence" value="ECO:0000250"/>
    <property type="project" value="UniProtKB"/>
</dbReference>
<dbReference type="CDD" id="cd01888">
    <property type="entry name" value="eIF2_gamma"/>
    <property type="match status" value="1"/>
</dbReference>
<dbReference type="CDD" id="cd03688">
    <property type="entry name" value="eIF2_gamma_II"/>
    <property type="match status" value="1"/>
</dbReference>
<dbReference type="CDD" id="cd15490">
    <property type="entry name" value="eIF2_gamma_III"/>
    <property type="match status" value="1"/>
</dbReference>
<dbReference type="FunFam" id="2.40.30.10:FF:000009">
    <property type="entry name" value="Eukaryotic translation initiation factor 2 subunit gamma"/>
    <property type="match status" value="1"/>
</dbReference>
<dbReference type="FunFam" id="2.40.30.10:FF:000011">
    <property type="entry name" value="Eukaryotic translation initiation factor 2 subunit gamma"/>
    <property type="match status" value="1"/>
</dbReference>
<dbReference type="FunFam" id="3.40.50.300:FF:000065">
    <property type="entry name" value="Eukaryotic translation initiation factor 2 subunit gamma"/>
    <property type="match status" value="1"/>
</dbReference>
<dbReference type="Gene3D" id="3.40.50.300">
    <property type="entry name" value="P-loop containing nucleotide triphosphate hydrolases"/>
    <property type="match status" value="1"/>
</dbReference>
<dbReference type="Gene3D" id="2.40.30.10">
    <property type="entry name" value="Translation factors"/>
    <property type="match status" value="2"/>
</dbReference>
<dbReference type="InterPro" id="IPR004161">
    <property type="entry name" value="EFTu-like_2"/>
</dbReference>
<dbReference type="InterPro" id="IPR050543">
    <property type="entry name" value="eIF2G"/>
</dbReference>
<dbReference type="InterPro" id="IPR015256">
    <property type="entry name" value="eIF2g_C"/>
</dbReference>
<dbReference type="InterPro" id="IPR044127">
    <property type="entry name" value="eIF2g_dom_2"/>
</dbReference>
<dbReference type="InterPro" id="IPR044128">
    <property type="entry name" value="eIF2g_GTP-bd"/>
</dbReference>
<dbReference type="InterPro" id="IPR027417">
    <property type="entry name" value="P-loop_NTPase"/>
</dbReference>
<dbReference type="InterPro" id="IPR000795">
    <property type="entry name" value="T_Tr_GTP-bd_dom"/>
</dbReference>
<dbReference type="InterPro" id="IPR009000">
    <property type="entry name" value="Transl_B-barrel_sf"/>
</dbReference>
<dbReference type="InterPro" id="IPR009001">
    <property type="entry name" value="Transl_elong_EF1A/Init_IF2_C"/>
</dbReference>
<dbReference type="NCBIfam" id="NF003077">
    <property type="entry name" value="PRK04000.1"/>
    <property type="match status" value="1"/>
</dbReference>
<dbReference type="PANTHER" id="PTHR42854">
    <property type="entry name" value="EUKARYOTIC TRANSLATION INITIATION FACTOR 2 SUBUNIT 3 FAMILY MEMBER"/>
    <property type="match status" value="1"/>
</dbReference>
<dbReference type="PANTHER" id="PTHR42854:SF3">
    <property type="entry name" value="EUKARYOTIC TRANSLATION INITIATION FACTOR 2 SUBUNIT 3-RELATED"/>
    <property type="match status" value="1"/>
</dbReference>
<dbReference type="Pfam" id="PF09173">
    <property type="entry name" value="eIF2_C"/>
    <property type="match status" value="1"/>
</dbReference>
<dbReference type="Pfam" id="PF00009">
    <property type="entry name" value="GTP_EFTU"/>
    <property type="match status" value="1"/>
</dbReference>
<dbReference type="Pfam" id="PF03144">
    <property type="entry name" value="GTP_EFTU_D2"/>
    <property type="match status" value="1"/>
</dbReference>
<dbReference type="PRINTS" id="PR00315">
    <property type="entry name" value="ELONGATNFCT"/>
</dbReference>
<dbReference type="SUPFAM" id="SSF50465">
    <property type="entry name" value="EF-Tu/eEF-1alpha/eIF2-gamma C-terminal domain"/>
    <property type="match status" value="1"/>
</dbReference>
<dbReference type="SUPFAM" id="SSF52540">
    <property type="entry name" value="P-loop containing nucleoside triphosphate hydrolases"/>
    <property type="match status" value="1"/>
</dbReference>
<dbReference type="SUPFAM" id="SSF50447">
    <property type="entry name" value="Translation proteins"/>
    <property type="match status" value="1"/>
</dbReference>
<dbReference type="PROSITE" id="PS51722">
    <property type="entry name" value="G_TR_2"/>
    <property type="match status" value="1"/>
</dbReference>
<protein>
    <recommendedName>
        <fullName>Eukaryotic translation initiation factor 2 subunit 3</fullName>
        <ecNumber evidence="2">3.6.5.3</ecNumber>
    </recommendedName>
    <alternativeName>
        <fullName>Eukaryotic translation initiation factor 2 subunit gamma</fullName>
        <shortName>eIF2-gamma</shortName>
    </alternativeName>
</protein>
<evidence type="ECO:0000250" key="1">
    <source>
        <dbReference type="UniProtKB" id="P05198"/>
    </source>
</evidence>
<evidence type="ECO:0000250" key="2">
    <source>
        <dbReference type="UniProtKB" id="P32481"/>
    </source>
</evidence>
<evidence type="ECO:0000250" key="3">
    <source>
        <dbReference type="UniProtKB" id="P41091"/>
    </source>
</evidence>
<evidence type="ECO:0000250" key="4">
    <source>
        <dbReference type="UniProtKB" id="Q09130"/>
    </source>
</evidence>
<evidence type="ECO:0000250" key="5">
    <source>
        <dbReference type="UniProtKB" id="Q9Z0N1"/>
    </source>
</evidence>
<evidence type="ECO:0000255" key="6">
    <source>
        <dbReference type="PROSITE-ProRule" id="PRU01059"/>
    </source>
</evidence>
<evidence type="ECO:0000312" key="7">
    <source>
        <dbReference type="Proteomes" id="UP000314985"/>
    </source>
</evidence>
<accession>P20461</accession>
<accession>A0A8D1UL18</accession>
<sequence length="472" mass="51065">MAGGEAGVTLGQPHLSRQDLATLDVTKLTPLSHEVISRQATINIGTIGHVAHGKSTVVKAISGVHTVRFKNELERNITIKLGYANAKIYKLDDPSCPRPECYRSCGSSTPDEFPTDIPGTKGNFKLVRHVSFVDCPGHDILMATMLNGAAVMDAALLLIAGNESCPQPQTSEHLAAIEIMKLKHILILQNKIDLVKESQAKEQYDQILAFVQGTVAEGAPIIPISAQLKYNIEVVCEYIVKKIPVPPRDFTSEPRLIVIRSFDVNKPGCEVDDLKGGVAGGSILKGVLKVGQEIEVRPGIVSKDSEGKLMCKPIFSKIVSLFAEHNDLQYAAPGGLIGVGTKIDPTLCRADRMVGQVLGAVGALPEIFTELEISYFLLRRLLGVRTEGDKKAAKVQKLSKNEVLMVNIGSLSTGGRVSAVKADLGKIVLTNPVCTEVGEKIALSRRVEKHWRLIGWGQIRRGVTIKPTVDDD</sequence>
<keyword id="KW-0007">Acetylation</keyword>
<keyword id="KW-0963">Cytoplasm</keyword>
<keyword id="KW-0903">Direct protein sequencing</keyword>
<keyword id="KW-0342">GTP-binding</keyword>
<keyword id="KW-0378">Hydrolase</keyword>
<keyword id="KW-0396">Initiation factor</keyword>
<keyword id="KW-0547">Nucleotide-binding</keyword>
<keyword id="KW-0597">Phosphoprotein</keyword>
<keyword id="KW-0648">Protein biosynthesis</keyword>
<keyword id="KW-1185">Reference proteome</keyword>
<name>IF2G_PIG</name>
<comment type="function">
    <text evidence="1">Member of the eIF2 complex that functions in the early steps of protein synthesis by forming a ternary complex with GTP and initiator tRNA. This complex binds to a 40S ribosomal subunit, followed by mRNA binding to form the 43S pre-initiation complex (43S PIC). Junction of the 60S ribosomal subunit to form the 80S initiation complex is preceded by hydrolysis of the GTP bound to eIF2 and release of an eIF2-GDP binary complex. In order for eIF2 to recycle and catalyze another round of initiation, the GDP bound to eIF2 must exchange with GTP by way of a reaction catalyzed by eIF-2B (By similarity).</text>
</comment>
<comment type="catalytic activity">
    <reaction evidence="2">
        <text>GTP + H2O = GDP + phosphate + H(+)</text>
        <dbReference type="Rhea" id="RHEA:19669"/>
        <dbReference type="ChEBI" id="CHEBI:15377"/>
        <dbReference type="ChEBI" id="CHEBI:15378"/>
        <dbReference type="ChEBI" id="CHEBI:37565"/>
        <dbReference type="ChEBI" id="CHEBI:43474"/>
        <dbReference type="ChEBI" id="CHEBI:58189"/>
        <dbReference type="EC" id="3.6.5.3"/>
    </reaction>
</comment>
<comment type="subunit">
    <text evidence="3">Eukaryotic translation initiation factor 2 eIF2 is a heterotrimeric complex composed of an alpha (EIF2S1), a beta (EIF2S2) and a gamma (EIF2S3) chain. eIF2 is member of the 43S pre-initiation complex (43S PIC). Interacts (via C-terminus) with CDC123; the interaction is direct.</text>
</comment>
<comment type="subcellular location">
    <subcellularLocation>
        <location evidence="4">Cytoplasm</location>
        <location evidence="4">Cytosol</location>
    </subcellularLocation>
</comment>
<comment type="similarity">
    <text evidence="6">Belongs to the TRAFAC class translation factor GTPase superfamily. Classic translation factor GTPase family. EIF2G subfamily.</text>
</comment>
<gene>
    <name type="primary">EIF2S3</name>
    <name type="synonym">EIF2G</name>
</gene>
<proteinExistence type="evidence at protein level"/>
<organism>
    <name type="scientific">Sus scrofa</name>
    <name type="common">Pig</name>
    <dbReference type="NCBI Taxonomy" id="9823"/>
    <lineage>
        <taxon>Eukaryota</taxon>
        <taxon>Metazoa</taxon>
        <taxon>Chordata</taxon>
        <taxon>Craniata</taxon>
        <taxon>Vertebrata</taxon>
        <taxon>Euteleostomi</taxon>
        <taxon>Mammalia</taxon>
        <taxon>Eutheria</taxon>
        <taxon>Laurasiatheria</taxon>
        <taxon>Artiodactyla</taxon>
        <taxon>Suina</taxon>
        <taxon>Suidae</taxon>
        <taxon>Sus</taxon>
    </lineage>
</organism>